<protein>
    <recommendedName>
        <fullName evidence="1">Serine hydroxymethyltransferase</fullName>
        <shortName evidence="1">SHMT</shortName>
        <shortName evidence="1">Serine methylase</shortName>
        <ecNumber evidence="1">2.1.2.1</ecNumber>
    </recommendedName>
</protein>
<accession>A2C090</accession>
<organism>
    <name type="scientific">Prochlorococcus marinus (strain NATL1A)</name>
    <dbReference type="NCBI Taxonomy" id="167555"/>
    <lineage>
        <taxon>Bacteria</taxon>
        <taxon>Bacillati</taxon>
        <taxon>Cyanobacteriota</taxon>
        <taxon>Cyanophyceae</taxon>
        <taxon>Synechococcales</taxon>
        <taxon>Prochlorococcaceae</taxon>
        <taxon>Prochlorococcus</taxon>
    </lineage>
</organism>
<name>GLYA_PROM1</name>
<dbReference type="EC" id="2.1.2.1" evidence="1"/>
<dbReference type="EMBL" id="CP000553">
    <property type="protein sequence ID" value="ABM74900.1"/>
    <property type="molecule type" value="Genomic_DNA"/>
</dbReference>
<dbReference type="RefSeq" id="WP_011823107.1">
    <property type="nucleotide sequence ID" value="NC_008819.1"/>
</dbReference>
<dbReference type="SMR" id="A2C090"/>
<dbReference type="KEGG" id="pme:NATL1_03361"/>
<dbReference type="eggNOG" id="COG0112">
    <property type="taxonomic scope" value="Bacteria"/>
</dbReference>
<dbReference type="HOGENOM" id="CLU_022477_2_1_3"/>
<dbReference type="UniPathway" id="UPA00193"/>
<dbReference type="UniPathway" id="UPA00288">
    <property type="reaction ID" value="UER01023"/>
</dbReference>
<dbReference type="Proteomes" id="UP000002592">
    <property type="component" value="Chromosome"/>
</dbReference>
<dbReference type="GO" id="GO:0005829">
    <property type="term" value="C:cytosol"/>
    <property type="evidence" value="ECO:0007669"/>
    <property type="project" value="TreeGrafter"/>
</dbReference>
<dbReference type="GO" id="GO:0004372">
    <property type="term" value="F:glycine hydroxymethyltransferase activity"/>
    <property type="evidence" value="ECO:0007669"/>
    <property type="project" value="UniProtKB-UniRule"/>
</dbReference>
<dbReference type="GO" id="GO:0030170">
    <property type="term" value="F:pyridoxal phosphate binding"/>
    <property type="evidence" value="ECO:0007669"/>
    <property type="project" value="UniProtKB-UniRule"/>
</dbReference>
<dbReference type="GO" id="GO:0019264">
    <property type="term" value="P:glycine biosynthetic process from serine"/>
    <property type="evidence" value="ECO:0007669"/>
    <property type="project" value="UniProtKB-UniRule"/>
</dbReference>
<dbReference type="GO" id="GO:0035999">
    <property type="term" value="P:tetrahydrofolate interconversion"/>
    <property type="evidence" value="ECO:0007669"/>
    <property type="project" value="UniProtKB-UniRule"/>
</dbReference>
<dbReference type="CDD" id="cd00378">
    <property type="entry name" value="SHMT"/>
    <property type="match status" value="1"/>
</dbReference>
<dbReference type="FunFam" id="3.40.640.10:FF:000001">
    <property type="entry name" value="Serine hydroxymethyltransferase"/>
    <property type="match status" value="1"/>
</dbReference>
<dbReference type="Gene3D" id="3.90.1150.10">
    <property type="entry name" value="Aspartate Aminotransferase, domain 1"/>
    <property type="match status" value="1"/>
</dbReference>
<dbReference type="Gene3D" id="3.40.640.10">
    <property type="entry name" value="Type I PLP-dependent aspartate aminotransferase-like (Major domain)"/>
    <property type="match status" value="1"/>
</dbReference>
<dbReference type="HAMAP" id="MF_00051">
    <property type="entry name" value="SHMT"/>
    <property type="match status" value="1"/>
</dbReference>
<dbReference type="InterPro" id="IPR015424">
    <property type="entry name" value="PyrdxlP-dep_Trfase"/>
</dbReference>
<dbReference type="InterPro" id="IPR015421">
    <property type="entry name" value="PyrdxlP-dep_Trfase_major"/>
</dbReference>
<dbReference type="InterPro" id="IPR015422">
    <property type="entry name" value="PyrdxlP-dep_Trfase_small"/>
</dbReference>
<dbReference type="InterPro" id="IPR001085">
    <property type="entry name" value="Ser_HO-MeTrfase"/>
</dbReference>
<dbReference type="InterPro" id="IPR049943">
    <property type="entry name" value="Ser_HO-MeTrfase-like"/>
</dbReference>
<dbReference type="InterPro" id="IPR019798">
    <property type="entry name" value="Ser_HO-MeTrfase_PLP_BS"/>
</dbReference>
<dbReference type="InterPro" id="IPR039429">
    <property type="entry name" value="SHMT-like_dom"/>
</dbReference>
<dbReference type="NCBIfam" id="NF000586">
    <property type="entry name" value="PRK00011.1"/>
    <property type="match status" value="1"/>
</dbReference>
<dbReference type="PANTHER" id="PTHR11680">
    <property type="entry name" value="SERINE HYDROXYMETHYLTRANSFERASE"/>
    <property type="match status" value="1"/>
</dbReference>
<dbReference type="PANTHER" id="PTHR11680:SF35">
    <property type="entry name" value="SERINE HYDROXYMETHYLTRANSFERASE 1"/>
    <property type="match status" value="1"/>
</dbReference>
<dbReference type="Pfam" id="PF00464">
    <property type="entry name" value="SHMT"/>
    <property type="match status" value="1"/>
</dbReference>
<dbReference type="PIRSF" id="PIRSF000412">
    <property type="entry name" value="SHMT"/>
    <property type="match status" value="1"/>
</dbReference>
<dbReference type="SUPFAM" id="SSF53383">
    <property type="entry name" value="PLP-dependent transferases"/>
    <property type="match status" value="1"/>
</dbReference>
<dbReference type="PROSITE" id="PS00096">
    <property type="entry name" value="SHMT"/>
    <property type="match status" value="1"/>
</dbReference>
<proteinExistence type="inferred from homology"/>
<comment type="function">
    <text evidence="1">Catalyzes the reversible interconversion of serine and glycine with tetrahydrofolate (THF) serving as the one-carbon carrier. This reaction serves as the major source of one-carbon groups required for the biosynthesis of purines, thymidylate, methionine, and other important biomolecules. Also exhibits THF-independent aldolase activity toward beta-hydroxyamino acids, producing glycine and aldehydes, via a retro-aldol mechanism.</text>
</comment>
<comment type="catalytic activity">
    <reaction evidence="1">
        <text>(6R)-5,10-methylene-5,6,7,8-tetrahydrofolate + glycine + H2O = (6S)-5,6,7,8-tetrahydrofolate + L-serine</text>
        <dbReference type="Rhea" id="RHEA:15481"/>
        <dbReference type="ChEBI" id="CHEBI:15377"/>
        <dbReference type="ChEBI" id="CHEBI:15636"/>
        <dbReference type="ChEBI" id="CHEBI:33384"/>
        <dbReference type="ChEBI" id="CHEBI:57305"/>
        <dbReference type="ChEBI" id="CHEBI:57453"/>
        <dbReference type="EC" id="2.1.2.1"/>
    </reaction>
</comment>
<comment type="cofactor">
    <cofactor evidence="1">
        <name>pyridoxal 5'-phosphate</name>
        <dbReference type="ChEBI" id="CHEBI:597326"/>
    </cofactor>
</comment>
<comment type="pathway">
    <text evidence="1">One-carbon metabolism; tetrahydrofolate interconversion.</text>
</comment>
<comment type="pathway">
    <text evidence="1">Amino-acid biosynthesis; glycine biosynthesis; glycine from L-serine: step 1/1.</text>
</comment>
<comment type="subunit">
    <text evidence="1">Homodimer.</text>
</comment>
<comment type="subcellular location">
    <subcellularLocation>
        <location evidence="1">Cytoplasm</location>
    </subcellularLocation>
</comment>
<comment type="similarity">
    <text evidence="1">Belongs to the SHMT family.</text>
</comment>
<keyword id="KW-0028">Amino-acid biosynthesis</keyword>
<keyword id="KW-0963">Cytoplasm</keyword>
<keyword id="KW-0554">One-carbon metabolism</keyword>
<keyword id="KW-0663">Pyridoxal phosphate</keyword>
<keyword id="KW-0808">Transferase</keyword>
<gene>
    <name evidence="1" type="primary">glyA</name>
    <name type="ordered locus">NATL1_03361</name>
</gene>
<feature type="chain" id="PRO_1000006294" description="Serine hydroxymethyltransferase">
    <location>
        <begin position="1"/>
        <end position="411"/>
    </location>
</feature>
<feature type="binding site" evidence="1">
    <location>
        <position position="113"/>
    </location>
    <ligand>
        <name>(6S)-5,6,7,8-tetrahydrofolate</name>
        <dbReference type="ChEBI" id="CHEBI:57453"/>
    </ligand>
</feature>
<feature type="binding site" evidence="1">
    <location>
        <begin position="117"/>
        <end position="119"/>
    </location>
    <ligand>
        <name>(6S)-5,6,7,8-tetrahydrofolate</name>
        <dbReference type="ChEBI" id="CHEBI:57453"/>
    </ligand>
</feature>
<feature type="binding site" evidence="1">
    <location>
        <position position="238"/>
    </location>
    <ligand>
        <name>(6S)-5,6,7,8-tetrahydrofolate</name>
        <dbReference type="ChEBI" id="CHEBI:57453"/>
    </ligand>
</feature>
<feature type="binding site" evidence="1">
    <location>
        <begin position="346"/>
        <end position="348"/>
    </location>
    <ligand>
        <name>(6S)-5,6,7,8-tetrahydrofolate</name>
        <dbReference type="ChEBI" id="CHEBI:57453"/>
    </ligand>
</feature>
<feature type="site" description="Plays an important role in substrate specificity" evidence="1">
    <location>
        <position position="221"/>
    </location>
</feature>
<feature type="modified residue" description="N6-(pyridoxal phosphate)lysine" evidence="1">
    <location>
        <position position="222"/>
    </location>
</feature>
<sequence length="411" mass="44824">MKCDPSIAKLINNELSRQETHLELIASENFASKAVMEAQGSVLTNKYAEGLPNKRYYGGCEYIDGIEQLAIDRAKNLFGANWANVQPHSGAQANFAVFLSLLKPGDTIMGMDLSHGGHLTHGSPVNVSGKWFKTCHYEVDKKTEMLDMDAIRKKAIENQPKLIICGFSAYPRKIDFKAFRSIADEVNAYLLADIAHIAGLVASGLHPSPIPYCDVVTTTTHKTLRGPRGGLILSKDEEIGKKLDKAVFPGTQGGPLEHVIAAKAVAFQEASAPEFKIYSQKVISNAQVLSNQLQKRGISIVSKGTDNHIVLLDLRSIGMTGKVADQLVSDIKITANKNTVPFDPESPFVTSGLRLGSAALTTRGFNEQAFEDVGNIIADRLLNPNDEDIKENSINKVSELCNKFPLYSENI</sequence>
<reference key="1">
    <citation type="journal article" date="2007" name="PLoS Genet.">
        <title>Patterns and implications of gene gain and loss in the evolution of Prochlorococcus.</title>
        <authorList>
            <person name="Kettler G.C."/>
            <person name="Martiny A.C."/>
            <person name="Huang K."/>
            <person name="Zucker J."/>
            <person name="Coleman M.L."/>
            <person name="Rodrigue S."/>
            <person name="Chen F."/>
            <person name="Lapidus A."/>
            <person name="Ferriera S."/>
            <person name="Johnson J."/>
            <person name="Steglich C."/>
            <person name="Church G.M."/>
            <person name="Richardson P."/>
            <person name="Chisholm S.W."/>
        </authorList>
    </citation>
    <scope>NUCLEOTIDE SEQUENCE [LARGE SCALE GENOMIC DNA]</scope>
    <source>
        <strain>NATL1A</strain>
    </source>
</reference>
<evidence type="ECO:0000255" key="1">
    <source>
        <dbReference type="HAMAP-Rule" id="MF_00051"/>
    </source>
</evidence>